<evidence type="ECO:0000255" key="1">
    <source>
        <dbReference type="HAMAP-Rule" id="MF_00409"/>
    </source>
</evidence>
<name>LPXK_PECCP</name>
<accession>C6DFA2</accession>
<gene>
    <name evidence="1" type="primary">lpxK</name>
    <name type="ordered locus">PC1_1770</name>
</gene>
<protein>
    <recommendedName>
        <fullName evidence="1">Tetraacyldisaccharide 4'-kinase</fullName>
        <ecNumber evidence="1">2.7.1.130</ecNumber>
    </recommendedName>
    <alternativeName>
        <fullName evidence="1">Lipid A 4'-kinase</fullName>
    </alternativeName>
</protein>
<organism>
    <name type="scientific">Pectobacterium carotovorum subsp. carotovorum (strain PC1)</name>
    <dbReference type="NCBI Taxonomy" id="561230"/>
    <lineage>
        <taxon>Bacteria</taxon>
        <taxon>Pseudomonadati</taxon>
        <taxon>Pseudomonadota</taxon>
        <taxon>Gammaproteobacteria</taxon>
        <taxon>Enterobacterales</taxon>
        <taxon>Pectobacteriaceae</taxon>
        <taxon>Pectobacterium</taxon>
    </lineage>
</organism>
<keyword id="KW-0067">ATP-binding</keyword>
<keyword id="KW-0418">Kinase</keyword>
<keyword id="KW-0441">Lipid A biosynthesis</keyword>
<keyword id="KW-0444">Lipid biosynthesis</keyword>
<keyword id="KW-0443">Lipid metabolism</keyword>
<keyword id="KW-0547">Nucleotide-binding</keyword>
<keyword id="KW-0808">Transferase</keyword>
<reference key="1">
    <citation type="submission" date="2009-07" db="EMBL/GenBank/DDBJ databases">
        <title>Complete sequence of Pectobacterium carotovorum subsp. carotovorum PC1.</title>
        <authorList>
            <consortium name="US DOE Joint Genome Institute"/>
            <person name="Lucas S."/>
            <person name="Copeland A."/>
            <person name="Lapidus A."/>
            <person name="Glavina del Rio T."/>
            <person name="Tice H."/>
            <person name="Bruce D."/>
            <person name="Goodwin L."/>
            <person name="Pitluck S."/>
            <person name="Munk A.C."/>
            <person name="Brettin T."/>
            <person name="Detter J.C."/>
            <person name="Han C."/>
            <person name="Tapia R."/>
            <person name="Larimer F."/>
            <person name="Land M."/>
            <person name="Hauser L."/>
            <person name="Kyrpides N."/>
            <person name="Mikhailova N."/>
            <person name="Balakrishnan V."/>
            <person name="Glasner J."/>
            <person name="Perna N.T."/>
        </authorList>
    </citation>
    <scope>NUCLEOTIDE SEQUENCE [LARGE SCALE GENOMIC DNA]</scope>
    <source>
        <strain>PC1</strain>
    </source>
</reference>
<sequence length="333" mass="37275">MIERIWSGRSRLYWLLLPLSWLYGFITFLIRQSYRLGWRKSWRAPVPVVVVGNLTAGGNGKTPVVIWLVEHLQRRGYRVGVVSRGYGGKAERYPLLLDDTVTTAQAGDEPVLIFQRTGAPVAVAPRRRDAVSALLAQHTLDVVITDDGLQHYALERDIELVVIDGMRRFGNGWWLPAGPMRERESRLTSVDAVIVNGGTPRTNEIGMTLTAGMAVNLLSGESRPLSQLHDVVAMAGIGHPPRFFATLREAGVSIAREIAFADHQSYQPEQLESLTQDATQPLLMTEKDAVKCKTFAQRNWWYLPVDAMLAEPRATQLLDKLESVIKRHTSNRT</sequence>
<comment type="function">
    <text evidence="1">Transfers the gamma-phosphate of ATP to the 4'-position of a tetraacyldisaccharide 1-phosphate intermediate (termed DS-1-P) to form tetraacyldisaccharide 1,4'-bis-phosphate (lipid IVA).</text>
</comment>
<comment type="catalytic activity">
    <reaction evidence="1">
        <text>a lipid A disaccharide + ATP = a lipid IVA + ADP + H(+)</text>
        <dbReference type="Rhea" id="RHEA:67840"/>
        <dbReference type="ChEBI" id="CHEBI:15378"/>
        <dbReference type="ChEBI" id="CHEBI:30616"/>
        <dbReference type="ChEBI" id="CHEBI:176343"/>
        <dbReference type="ChEBI" id="CHEBI:176425"/>
        <dbReference type="ChEBI" id="CHEBI:456216"/>
        <dbReference type="EC" id="2.7.1.130"/>
    </reaction>
</comment>
<comment type="pathway">
    <text evidence="1">Glycolipid biosynthesis; lipid IV(A) biosynthesis; lipid IV(A) from (3R)-3-hydroxytetradecanoyl-[acyl-carrier-protein] and UDP-N-acetyl-alpha-D-glucosamine: step 6/6.</text>
</comment>
<comment type="similarity">
    <text evidence="1">Belongs to the LpxK family.</text>
</comment>
<proteinExistence type="inferred from homology"/>
<dbReference type="EC" id="2.7.1.130" evidence="1"/>
<dbReference type="EMBL" id="CP001657">
    <property type="protein sequence ID" value="ACT12811.1"/>
    <property type="molecule type" value="Genomic_DNA"/>
</dbReference>
<dbReference type="RefSeq" id="WP_015840019.1">
    <property type="nucleotide sequence ID" value="NC_012917.1"/>
</dbReference>
<dbReference type="SMR" id="C6DFA2"/>
<dbReference type="STRING" id="561230.PC1_1770"/>
<dbReference type="KEGG" id="pct:PC1_1770"/>
<dbReference type="eggNOG" id="COG1663">
    <property type="taxonomic scope" value="Bacteria"/>
</dbReference>
<dbReference type="HOGENOM" id="CLU_038816_2_0_6"/>
<dbReference type="OrthoDB" id="9766423at2"/>
<dbReference type="UniPathway" id="UPA00359">
    <property type="reaction ID" value="UER00482"/>
</dbReference>
<dbReference type="Proteomes" id="UP000002736">
    <property type="component" value="Chromosome"/>
</dbReference>
<dbReference type="GO" id="GO:0005886">
    <property type="term" value="C:plasma membrane"/>
    <property type="evidence" value="ECO:0007669"/>
    <property type="project" value="TreeGrafter"/>
</dbReference>
<dbReference type="GO" id="GO:0005524">
    <property type="term" value="F:ATP binding"/>
    <property type="evidence" value="ECO:0007669"/>
    <property type="project" value="UniProtKB-UniRule"/>
</dbReference>
<dbReference type="GO" id="GO:0009029">
    <property type="term" value="F:tetraacyldisaccharide 4'-kinase activity"/>
    <property type="evidence" value="ECO:0007669"/>
    <property type="project" value="UniProtKB-UniRule"/>
</dbReference>
<dbReference type="GO" id="GO:0009245">
    <property type="term" value="P:lipid A biosynthetic process"/>
    <property type="evidence" value="ECO:0007669"/>
    <property type="project" value="UniProtKB-UniRule"/>
</dbReference>
<dbReference type="GO" id="GO:0009244">
    <property type="term" value="P:lipopolysaccharide core region biosynthetic process"/>
    <property type="evidence" value="ECO:0007669"/>
    <property type="project" value="TreeGrafter"/>
</dbReference>
<dbReference type="Gene3D" id="3.40.50.300">
    <property type="entry name" value="P-loop containing nucleotide triphosphate hydrolases"/>
    <property type="match status" value="1"/>
</dbReference>
<dbReference type="HAMAP" id="MF_00409">
    <property type="entry name" value="LpxK"/>
    <property type="match status" value="1"/>
</dbReference>
<dbReference type="InterPro" id="IPR003758">
    <property type="entry name" value="LpxK"/>
</dbReference>
<dbReference type="InterPro" id="IPR027417">
    <property type="entry name" value="P-loop_NTPase"/>
</dbReference>
<dbReference type="NCBIfam" id="TIGR00682">
    <property type="entry name" value="lpxK"/>
    <property type="match status" value="1"/>
</dbReference>
<dbReference type="PANTHER" id="PTHR42724">
    <property type="entry name" value="TETRAACYLDISACCHARIDE 4'-KINASE"/>
    <property type="match status" value="1"/>
</dbReference>
<dbReference type="PANTHER" id="PTHR42724:SF1">
    <property type="entry name" value="TETRAACYLDISACCHARIDE 4'-KINASE, MITOCHONDRIAL-RELATED"/>
    <property type="match status" value="1"/>
</dbReference>
<dbReference type="Pfam" id="PF02606">
    <property type="entry name" value="LpxK"/>
    <property type="match status" value="1"/>
</dbReference>
<dbReference type="SUPFAM" id="SSF52540">
    <property type="entry name" value="P-loop containing nucleoside triphosphate hydrolases"/>
    <property type="match status" value="1"/>
</dbReference>
<feature type="chain" id="PRO_1000205971" description="Tetraacyldisaccharide 4'-kinase">
    <location>
        <begin position="1"/>
        <end position="333"/>
    </location>
</feature>
<feature type="binding site" evidence="1">
    <location>
        <begin position="55"/>
        <end position="62"/>
    </location>
    <ligand>
        <name>ATP</name>
        <dbReference type="ChEBI" id="CHEBI:30616"/>
    </ligand>
</feature>